<accession>P0C5X0</accession>
<protein>
    <recommendedName>
        <fullName>Brevinin-1DYe</fullName>
    </recommendedName>
</protein>
<reference key="1">
    <citation type="journal article" date="2007" name="Toxicon">
        <title>Cytolytic peptides belonging to the brevinin-1 and brevinin-2 families isolated from the skin of the Japanese brown frog, Rana dybowskii.</title>
        <authorList>
            <person name="Conlon J.M."/>
            <person name="Kolodziejek J."/>
            <person name="Nowotny N."/>
            <person name="Leprince J."/>
            <person name="Vaudry H."/>
            <person name="Coquet L."/>
            <person name="Jouenne T."/>
            <person name="Iwamuro S."/>
        </authorList>
    </citation>
    <scope>PROTEIN SEQUENCE</scope>
    <scope>FUNCTION</scope>
    <scope>MASS SPECTROMETRY</scope>
    <source>
        <tissue>Skin secretion</tissue>
    </source>
</reference>
<sequence length="17" mass="1910">FLIGMTQGLICLITRKC</sequence>
<keyword id="KW-0878">Amphibian defense peptide</keyword>
<keyword id="KW-0044">Antibiotic</keyword>
<keyword id="KW-0929">Antimicrobial</keyword>
<keyword id="KW-0903">Direct protein sequencing</keyword>
<keyword id="KW-1015">Disulfide bond</keyword>
<keyword id="KW-0964">Secreted</keyword>
<feature type="peptide" id="PRO_0000311598" description="Brevinin-1DYe">
    <location>
        <begin position="1"/>
        <end position="17"/>
    </location>
</feature>
<feature type="disulfide bond" evidence="1">
    <location>
        <begin position="11"/>
        <end position="17"/>
    </location>
</feature>
<name>BR1E_RANDY</name>
<organism>
    <name type="scientific">Rana dybowskii</name>
    <name type="common">Dybovsky's frog</name>
    <name type="synonym">Korean brown frog</name>
    <dbReference type="NCBI Taxonomy" id="71582"/>
    <lineage>
        <taxon>Eukaryota</taxon>
        <taxon>Metazoa</taxon>
        <taxon>Chordata</taxon>
        <taxon>Craniata</taxon>
        <taxon>Vertebrata</taxon>
        <taxon>Euteleostomi</taxon>
        <taxon>Amphibia</taxon>
        <taxon>Batrachia</taxon>
        <taxon>Anura</taxon>
        <taxon>Neobatrachia</taxon>
        <taxon>Ranoidea</taxon>
        <taxon>Ranidae</taxon>
        <taxon>Rana</taxon>
        <taxon>Rana</taxon>
    </lineage>
</organism>
<evidence type="ECO:0000250" key="1"/>
<evidence type="ECO:0000269" key="2">
    <source>
    </source>
</evidence>
<evidence type="ECO:0000305" key="3"/>
<proteinExistence type="evidence at protein level"/>
<comment type="function">
    <text evidence="1 2">Antimicrobial peptide.</text>
</comment>
<comment type="subcellular location">
    <subcellularLocation>
        <location>Secreted</location>
    </subcellularLocation>
</comment>
<comment type="tissue specificity">
    <text>Expressed by the skin glands.</text>
</comment>
<comment type="mass spectrometry" mass="1907.2" method="MALDI" evidence="2"/>
<comment type="similarity">
    <text evidence="3">Belongs to the frog skin active peptide (FSAP) family. Brevinin subfamily.</text>
</comment>
<dbReference type="GO" id="GO:0005576">
    <property type="term" value="C:extracellular region"/>
    <property type="evidence" value="ECO:0007669"/>
    <property type="project" value="UniProtKB-SubCell"/>
</dbReference>
<dbReference type="GO" id="GO:0042742">
    <property type="term" value="P:defense response to bacterium"/>
    <property type="evidence" value="ECO:0007669"/>
    <property type="project" value="UniProtKB-KW"/>
</dbReference>